<feature type="chain" id="PRO_1000010329" description="Imidazoleglycerol-phosphate dehydratase">
    <location>
        <begin position="1"/>
        <end position="197"/>
    </location>
</feature>
<comment type="catalytic activity">
    <reaction evidence="1">
        <text>D-erythro-1-(imidazol-4-yl)glycerol 3-phosphate = 3-(imidazol-4-yl)-2-oxopropyl phosphate + H2O</text>
        <dbReference type="Rhea" id="RHEA:11040"/>
        <dbReference type="ChEBI" id="CHEBI:15377"/>
        <dbReference type="ChEBI" id="CHEBI:57766"/>
        <dbReference type="ChEBI" id="CHEBI:58278"/>
        <dbReference type="EC" id="4.2.1.19"/>
    </reaction>
</comment>
<comment type="pathway">
    <text evidence="1">Amino-acid biosynthesis; L-histidine biosynthesis; L-histidine from 5-phospho-alpha-D-ribose 1-diphosphate: step 6/9.</text>
</comment>
<comment type="subcellular location">
    <subcellularLocation>
        <location evidence="1">Cytoplasm</location>
    </subcellularLocation>
</comment>
<comment type="similarity">
    <text evidence="1">Belongs to the imidazoleglycerol-phosphate dehydratase family.</text>
</comment>
<sequence length="197" mass="21937">MAERKASVARDTLETQIKVSIDLDGTGKARFDTGVPFLDHMMDQIARHGLIDLDIECKGDLHIDDHHTVEDIGITLGQAFAKAIGDKKGIRRYGHAYVPLDEALSRVVIDFSGRPGLQMHVPFTRASVGGFDVDLFMEFFQGFVNHAQVTLHIDNLRGHNTHHQIETVFKAFGRALRMAIELDERMAGQMPSTKGCL</sequence>
<organism>
    <name type="scientific">Pseudomonas paraeruginosa (strain DSM 24068 / PA7)</name>
    <name type="common">Pseudomonas aeruginosa (strain PA7)</name>
    <dbReference type="NCBI Taxonomy" id="381754"/>
    <lineage>
        <taxon>Bacteria</taxon>
        <taxon>Pseudomonadati</taxon>
        <taxon>Pseudomonadota</taxon>
        <taxon>Gammaproteobacteria</taxon>
        <taxon>Pseudomonadales</taxon>
        <taxon>Pseudomonadaceae</taxon>
        <taxon>Pseudomonas</taxon>
        <taxon>Pseudomonas paraeruginosa</taxon>
    </lineage>
</organism>
<reference key="1">
    <citation type="submission" date="2007-06" db="EMBL/GenBank/DDBJ databases">
        <authorList>
            <person name="Dodson R.J."/>
            <person name="Harkins D."/>
            <person name="Paulsen I.T."/>
        </authorList>
    </citation>
    <scope>NUCLEOTIDE SEQUENCE [LARGE SCALE GENOMIC DNA]</scope>
    <source>
        <strain>DSM 24068 / PA7</strain>
    </source>
</reference>
<protein>
    <recommendedName>
        <fullName evidence="1">Imidazoleglycerol-phosphate dehydratase</fullName>
        <shortName evidence="1">IGPD</shortName>
        <ecNumber evidence="1">4.2.1.19</ecNumber>
    </recommendedName>
</protein>
<name>HIS7_PSEP7</name>
<gene>
    <name evidence="1" type="primary">hisB</name>
    <name type="ordered locus">PSPA7_5879</name>
</gene>
<accession>A6VDR3</accession>
<dbReference type="EC" id="4.2.1.19" evidence="1"/>
<dbReference type="EMBL" id="CP000744">
    <property type="protein sequence ID" value="ABR83846.1"/>
    <property type="molecule type" value="Genomic_DNA"/>
</dbReference>
<dbReference type="RefSeq" id="WP_003096088.1">
    <property type="nucleotide sequence ID" value="NC_009656.1"/>
</dbReference>
<dbReference type="SMR" id="A6VDR3"/>
<dbReference type="GeneID" id="77223672"/>
<dbReference type="KEGG" id="pap:PSPA7_5879"/>
<dbReference type="HOGENOM" id="CLU_044308_3_0_6"/>
<dbReference type="UniPathway" id="UPA00031">
    <property type="reaction ID" value="UER00011"/>
</dbReference>
<dbReference type="Proteomes" id="UP000001582">
    <property type="component" value="Chromosome"/>
</dbReference>
<dbReference type="GO" id="GO:0005737">
    <property type="term" value="C:cytoplasm"/>
    <property type="evidence" value="ECO:0007669"/>
    <property type="project" value="UniProtKB-SubCell"/>
</dbReference>
<dbReference type="GO" id="GO:0004424">
    <property type="term" value="F:imidazoleglycerol-phosphate dehydratase activity"/>
    <property type="evidence" value="ECO:0007669"/>
    <property type="project" value="UniProtKB-UniRule"/>
</dbReference>
<dbReference type="GO" id="GO:0000105">
    <property type="term" value="P:L-histidine biosynthetic process"/>
    <property type="evidence" value="ECO:0007669"/>
    <property type="project" value="UniProtKB-UniRule"/>
</dbReference>
<dbReference type="CDD" id="cd07914">
    <property type="entry name" value="IGPD"/>
    <property type="match status" value="1"/>
</dbReference>
<dbReference type="FunFam" id="3.30.230.40:FF:000002">
    <property type="entry name" value="Imidazoleglycerol-phosphate dehydratase"/>
    <property type="match status" value="1"/>
</dbReference>
<dbReference type="FunFam" id="3.30.230.40:FF:000003">
    <property type="entry name" value="Imidazoleglycerol-phosphate dehydratase HisB"/>
    <property type="match status" value="1"/>
</dbReference>
<dbReference type="Gene3D" id="3.30.230.40">
    <property type="entry name" value="Imidazole glycerol phosphate dehydratase, domain 1"/>
    <property type="match status" value="2"/>
</dbReference>
<dbReference type="HAMAP" id="MF_00076">
    <property type="entry name" value="HisB"/>
    <property type="match status" value="1"/>
</dbReference>
<dbReference type="InterPro" id="IPR038494">
    <property type="entry name" value="IGPD_sf"/>
</dbReference>
<dbReference type="InterPro" id="IPR000807">
    <property type="entry name" value="ImidazoleglycerolP_deHydtase"/>
</dbReference>
<dbReference type="InterPro" id="IPR020565">
    <property type="entry name" value="ImidazoleglycerP_deHydtase_CS"/>
</dbReference>
<dbReference type="InterPro" id="IPR020568">
    <property type="entry name" value="Ribosomal_Su5_D2-typ_SF"/>
</dbReference>
<dbReference type="NCBIfam" id="NF002106">
    <property type="entry name" value="PRK00951.1-1"/>
    <property type="match status" value="1"/>
</dbReference>
<dbReference type="NCBIfam" id="NF002109">
    <property type="entry name" value="PRK00951.1-5"/>
    <property type="match status" value="1"/>
</dbReference>
<dbReference type="NCBIfam" id="NF002111">
    <property type="entry name" value="PRK00951.2-1"/>
    <property type="match status" value="1"/>
</dbReference>
<dbReference type="NCBIfam" id="NF002114">
    <property type="entry name" value="PRK00951.2-4"/>
    <property type="match status" value="1"/>
</dbReference>
<dbReference type="PANTHER" id="PTHR23133:SF2">
    <property type="entry name" value="IMIDAZOLEGLYCEROL-PHOSPHATE DEHYDRATASE"/>
    <property type="match status" value="1"/>
</dbReference>
<dbReference type="PANTHER" id="PTHR23133">
    <property type="entry name" value="IMIDAZOLEGLYCEROL-PHOSPHATE DEHYDRATASE HIS7"/>
    <property type="match status" value="1"/>
</dbReference>
<dbReference type="Pfam" id="PF00475">
    <property type="entry name" value="IGPD"/>
    <property type="match status" value="1"/>
</dbReference>
<dbReference type="SUPFAM" id="SSF54211">
    <property type="entry name" value="Ribosomal protein S5 domain 2-like"/>
    <property type="match status" value="2"/>
</dbReference>
<dbReference type="PROSITE" id="PS00954">
    <property type="entry name" value="IGP_DEHYDRATASE_1"/>
    <property type="match status" value="1"/>
</dbReference>
<dbReference type="PROSITE" id="PS00955">
    <property type="entry name" value="IGP_DEHYDRATASE_2"/>
    <property type="match status" value="1"/>
</dbReference>
<evidence type="ECO:0000255" key="1">
    <source>
        <dbReference type="HAMAP-Rule" id="MF_00076"/>
    </source>
</evidence>
<proteinExistence type="inferred from homology"/>
<keyword id="KW-0028">Amino-acid biosynthesis</keyword>
<keyword id="KW-0963">Cytoplasm</keyword>
<keyword id="KW-0368">Histidine biosynthesis</keyword>
<keyword id="KW-0456">Lyase</keyword>